<name>PRS8_DICDI</name>
<sequence>MVAQNNQQNKDETKGIKSYYCSKIEELEIKVNEKAQDLRRLEAQRNELNNRVRMLKEELQLLTNPGSHVAEVVKLMGKNKVLVKVNPEGKFVVDIDPTVDIAKLTPSTRAALKHESYTLHRILPNKIDPLVSLMKVEKIPDSTYDMVGGLDKQIKEIKEVIELPIKHPELFESLGIAQPKGVLLYGPPGTGKTLLARAVAHHTDCTFIRVSGSELVQKYIGEGSRMVRELFIMAREHAPSIIFMDEIDSIGSSRGESGSGGGDSEVQRTMLELLNQLDGFESTKNIKVLMCTNRIDILDPALLRPGRIDRKIEFPNPGDAGRLDILKIHSRKMNLTRGINLKKISDKMNGASGAELKAVCTEAGMYALRERRVHVSQEDFEMAVSKVMKKDSEQNMSINKLWK</sequence>
<gene>
    <name type="primary">psmC5</name>
    <name type="synonym">tbp10</name>
    <name type="synonym">tbpC</name>
    <name type="ORF">DDB_G0292382</name>
</gene>
<proteinExistence type="evidence at protein level"/>
<reference key="1">
    <citation type="journal article" date="2005" name="Nature">
        <title>The genome of the social amoeba Dictyostelium discoideum.</title>
        <authorList>
            <person name="Eichinger L."/>
            <person name="Pachebat J.A."/>
            <person name="Gloeckner G."/>
            <person name="Rajandream M.A."/>
            <person name="Sucgang R."/>
            <person name="Berriman M."/>
            <person name="Song J."/>
            <person name="Olsen R."/>
            <person name="Szafranski K."/>
            <person name="Xu Q."/>
            <person name="Tunggal B."/>
            <person name="Kummerfeld S."/>
            <person name="Madera M."/>
            <person name="Konfortov B.A."/>
            <person name="Rivero F."/>
            <person name="Bankier A.T."/>
            <person name="Lehmann R."/>
            <person name="Hamlin N."/>
            <person name="Davies R."/>
            <person name="Gaudet P."/>
            <person name="Fey P."/>
            <person name="Pilcher K."/>
            <person name="Chen G."/>
            <person name="Saunders D."/>
            <person name="Sodergren E.J."/>
            <person name="Davis P."/>
            <person name="Kerhornou A."/>
            <person name="Nie X."/>
            <person name="Hall N."/>
            <person name="Anjard C."/>
            <person name="Hemphill L."/>
            <person name="Bason N."/>
            <person name="Farbrother P."/>
            <person name="Desany B."/>
            <person name="Just E."/>
            <person name="Morio T."/>
            <person name="Rost R."/>
            <person name="Churcher C.M."/>
            <person name="Cooper J."/>
            <person name="Haydock S."/>
            <person name="van Driessche N."/>
            <person name="Cronin A."/>
            <person name="Goodhead I."/>
            <person name="Muzny D.M."/>
            <person name="Mourier T."/>
            <person name="Pain A."/>
            <person name="Lu M."/>
            <person name="Harper D."/>
            <person name="Lindsay R."/>
            <person name="Hauser H."/>
            <person name="James K.D."/>
            <person name="Quiles M."/>
            <person name="Madan Babu M."/>
            <person name="Saito T."/>
            <person name="Buchrieser C."/>
            <person name="Wardroper A."/>
            <person name="Felder M."/>
            <person name="Thangavelu M."/>
            <person name="Johnson D."/>
            <person name="Knights A."/>
            <person name="Loulseged H."/>
            <person name="Mungall K.L."/>
            <person name="Oliver K."/>
            <person name="Price C."/>
            <person name="Quail M.A."/>
            <person name="Urushihara H."/>
            <person name="Hernandez J."/>
            <person name="Rabbinowitsch E."/>
            <person name="Steffen D."/>
            <person name="Sanders M."/>
            <person name="Ma J."/>
            <person name="Kohara Y."/>
            <person name="Sharp S."/>
            <person name="Simmonds M.N."/>
            <person name="Spiegler S."/>
            <person name="Tivey A."/>
            <person name="Sugano S."/>
            <person name="White B."/>
            <person name="Walker D."/>
            <person name="Woodward J.R."/>
            <person name="Winckler T."/>
            <person name="Tanaka Y."/>
            <person name="Shaulsky G."/>
            <person name="Schleicher M."/>
            <person name="Weinstock G.M."/>
            <person name="Rosenthal A."/>
            <person name="Cox E.C."/>
            <person name="Chisholm R.L."/>
            <person name="Gibbs R.A."/>
            <person name="Loomis W.F."/>
            <person name="Platzer M."/>
            <person name="Kay R.R."/>
            <person name="Williams J.G."/>
            <person name="Dear P.H."/>
            <person name="Noegel A.A."/>
            <person name="Barrell B.G."/>
            <person name="Kuspa A."/>
        </authorList>
    </citation>
    <scope>NUCLEOTIDE SEQUENCE [LARGE SCALE GENOMIC DNA]</scope>
    <source>
        <strain>AX4</strain>
    </source>
</reference>
<reference key="2">
    <citation type="journal article" date="1993" name="Biochem. Biophys. Res. Commun.">
        <title>Molecular cloning and developmental regulation of Dictyostelium discoideum homologues of the human and yeast HIV1 Tat-binding protein.</title>
        <authorList>
            <person name="Shaw D.R."/>
            <person name="Ennis H.L."/>
        </authorList>
    </citation>
    <scope>NUCLEOTIDE SEQUENCE [MRNA] OF 15-403</scope>
    <source>
        <strain>AX4</strain>
    </source>
</reference>
<reference key="3">
    <citation type="submission" date="2009-07" db="UniProtKB">
        <authorList>
            <person name="Bienvenut W.V."/>
            <person name="Ura S."/>
            <person name="Insall R.H."/>
        </authorList>
    </citation>
    <scope>PROTEIN SEQUENCE OF 91-103; 139-152; 181-192; 229-235 AND 295-304</scope>
    <scope>IDENTIFICATION BY MASS SPECTROMETRY</scope>
    <source>
        <strain>AX2</strain>
    </source>
</reference>
<comment type="function">
    <text evidence="1">The 26S proteasome is involved in the ATP-dependent degradation of ubiquitinated proteins. The regulatory (or ATPase) complex confers ATP dependency and substrate specificity to the 26S complex (By similarity).</text>
</comment>
<comment type="subcellular location">
    <subcellularLocation>
        <location evidence="3">Cytoplasm</location>
    </subcellularLocation>
    <subcellularLocation>
        <location evidence="3">Nucleus</location>
    </subcellularLocation>
</comment>
<comment type="developmental stage">
    <text>Highest expression in vegetatively growing cells. The level of expression falls steadily throughout multicellular development and are not found in dormant or germinating spores.</text>
</comment>
<comment type="similarity">
    <text evidence="3">Belongs to the AAA ATPase family.</text>
</comment>
<dbReference type="EMBL" id="AAFI02000190">
    <property type="protein sequence ID" value="EAL61170.1"/>
    <property type="molecule type" value="Genomic_DNA"/>
</dbReference>
<dbReference type="EMBL" id="L16579">
    <property type="protein sequence ID" value="AAA33254.1"/>
    <property type="molecule type" value="mRNA"/>
</dbReference>
<dbReference type="PIR" id="JN0610">
    <property type="entry name" value="JN0610"/>
</dbReference>
<dbReference type="RefSeq" id="XP_629632.1">
    <property type="nucleotide sequence ID" value="XM_629630.1"/>
</dbReference>
<dbReference type="SMR" id="P34124"/>
<dbReference type="FunCoup" id="P34124">
    <property type="interactions" value="388"/>
</dbReference>
<dbReference type="STRING" id="44689.P34124"/>
<dbReference type="PaxDb" id="44689-DDB0216230"/>
<dbReference type="EnsemblProtists" id="EAL61170">
    <property type="protein sequence ID" value="EAL61170"/>
    <property type="gene ID" value="DDB_G0292382"/>
</dbReference>
<dbReference type="GeneID" id="8628696"/>
<dbReference type="KEGG" id="ddi:DDB_G0292382"/>
<dbReference type="dictyBase" id="DDB_G0292382">
    <property type="gene designation" value="psmC5"/>
</dbReference>
<dbReference type="VEuPathDB" id="AmoebaDB:DDB_G0292382"/>
<dbReference type="eggNOG" id="KOG0728">
    <property type="taxonomic scope" value="Eukaryota"/>
</dbReference>
<dbReference type="HOGENOM" id="CLU_000688_2_0_1"/>
<dbReference type="InParanoid" id="P34124"/>
<dbReference type="OMA" id="REPAVIF"/>
<dbReference type="PhylomeDB" id="P34124"/>
<dbReference type="PRO" id="PR:P34124"/>
<dbReference type="Proteomes" id="UP000002195">
    <property type="component" value="Chromosome 6"/>
</dbReference>
<dbReference type="GO" id="GO:0005737">
    <property type="term" value="C:cytoplasm"/>
    <property type="evidence" value="ECO:0007669"/>
    <property type="project" value="UniProtKB-SubCell"/>
</dbReference>
<dbReference type="GO" id="GO:0005634">
    <property type="term" value="C:nucleus"/>
    <property type="evidence" value="ECO:0007669"/>
    <property type="project" value="UniProtKB-SubCell"/>
</dbReference>
<dbReference type="GO" id="GO:0005838">
    <property type="term" value="C:proteasome regulatory particle"/>
    <property type="evidence" value="ECO:0000250"/>
    <property type="project" value="dictyBase"/>
</dbReference>
<dbReference type="GO" id="GO:0008540">
    <property type="term" value="C:proteasome regulatory particle, base subcomplex"/>
    <property type="evidence" value="ECO:0000318"/>
    <property type="project" value="GO_Central"/>
</dbReference>
<dbReference type="GO" id="GO:0005524">
    <property type="term" value="F:ATP binding"/>
    <property type="evidence" value="ECO:0007669"/>
    <property type="project" value="UniProtKB-KW"/>
</dbReference>
<dbReference type="GO" id="GO:0016887">
    <property type="term" value="F:ATP hydrolysis activity"/>
    <property type="evidence" value="ECO:0007669"/>
    <property type="project" value="InterPro"/>
</dbReference>
<dbReference type="GO" id="GO:0036402">
    <property type="term" value="F:proteasome-activating activity"/>
    <property type="evidence" value="ECO:0000318"/>
    <property type="project" value="GO_Central"/>
</dbReference>
<dbReference type="GO" id="GO:0043161">
    <property type="term" value="P:proteasome-mediated ubiquitin-dependent protein catabolic process"/>
    <property type="evidence" value="ECO:0000318"/>
    <property type="project" value="GO_Central"/>
</dbReference>
<dbReference type="GO" id="GO:0006508">
    <property type="term" value="P:proteolysis"/>
    <property type="evidence" value="ECO:0000250"/>
    <property type="project" value="dictyBase"/>
</dbReference>
<dbReference type="CDD" id="cd19502">
    <property type="entry name" value="RecA-like_PAN_like"/>
    <property type="match status" value="1"/>
</dbReference>
<dbReference type="FunFam" id="1.10.8.60:FF:000006">
    <property type="entry name" value="26S protease regulatory subunit 8"/>
    <property type="match status" value="1"/>
</dbReference>
<dbReference type="FunFam" id="2.40.50.140:FF:000044">
    <property type="entry name" value="26S protease regulatory subunit 8"/>
    <property type="match status" value="1"/>
</dbReference>
<dbReference type="FunFam" id="3.40.50.300:FF:000030">
    <property type="entry name" value="26S protease regulatory subunit 8"/>
    <property type="match status" value="1"/>
</dbReference>
<dbReference type="Gene3D" id="1.10.8.60">
    <property type="match status" value="1"/>
</dbReference>
<dbReference type="Gene3D" id="2.40.50.140">
    <property type="entry name" value="Nucleic acid-binding proteins"/>
    <property type="match status" value="1"/>
</dbReference>
<dbReference type="Gene3D" id="3.40.50.300">
    <property type="entry name" value="P-loop containing nucleotide triphosphate hydrolases"/>
    <property type="match status" value="1"/>
</dbReference>
<dbReference type="InterPro" id="IPR050221">
    <property type="entry name" value="26S_Proteasome_ATPase"/>
</dbReference>
<dbReference type="InterPro" id="IPR003593">
    <property type="entry name" value="AAA+_ATPase"/>
</dbReference>
<dbReference type="InterPro" id="IPR041569">
    <property type="entry name" value="AAA_lid_3"/>
</dbReference>
<dbReference type="InterPro" id="IPR003959">
    <property type="entry name" value="ATPase_AAA_core"/>
</dbReference>
<dbReference type="InterPro" id="IPR003960">
    <property type="entry name" value="ATPase_AAA_CS"/>
</dbReference>
<dbReference type="InterPro" id="IPR012340">
    <property type="entry name" value="NA-bd_OB-fold"/>
</dbReference>
<dbReference type="InterPro" id="IPR027417">
    <property type="entry name" value="P-loop_NTPase"/>
</dbReference>
<dbReference type="InterPro" id="IPR032501">
    <property type="entry name" value="Prot_ATP_ID_OB_2nd"/>
</dbReference>
<dbReference type="PANTHER" id="PTHR23073">
    <property type="entry name" value="26S PROTEASOME REGULATORY SUBUNIT"/>
    <property type="match status" value="1"/>
</dbReference>
<dbReference type="Pfam" id="PF00004">
    <property type="entry name" value="AAA"/>
    <property type="match status" value="1"/>
</dbReference>
<dbReference type="Pfam" id="PF17862">
    <property type="entry name" value="AAA_lid_3"/>
    <property type="match status" value="1"/>
</dbReference>
<dbReference type="Pfam" id="PF16450">
    <property type="entry name" value="Prot_ATP_ID_OB_C"/>
    <property type="match status" value="1"/>
</dbReference>
<dbReference type="SMART" id="SM00382">
    <property type="entry name" value="AAA"/>
    <property type="match status" value="1"/>
</dbReference>
<dbReference type="SUPFAM" id="SSF52540">
    <property type="entry name" value="P-loop containing nucleoside triphosphate hydrolases"/>
    <property type="match status" value="1"/>
</dbReference>
<dbReference type="PROSITE" id="PS00674">
    <property type="entry name" value="AAA"/>
    <property type="match status" value="1"/>
</dbReference>
<organism>
    <name type="scientific">Dictyostelium discoideum</name>
    <name type="common">Social amoeba</name>
    <dbReference type="NCBI Taxonomy" id="44689"/>
    <lineage>
        <taxon>Eukaryota</taxon>
        <taxon>Amoebozoa</taxon>
        <taxon>Evosea</taxon>
        <taxon>Eumycetozoa</taxon>
        <taxon>Dictyostelia</taxon>
        <taxon>Dictyosteliales</taxon>
        <taxon>Dictyosteliaceae</taxon>
        <taxon>Dictyostelium</taxon>
    </lineage>
</organism>
<accession>P34124</accession>
<accession>Q54D64</accession>
<keyword id="KW-0067">ATP-binding</keyword>
<keyword id="KW-0963">Cytoplasm</keyword>
<keyword id="KW-0903">Direct protein sequencing</keyword>
<keyword id="KW-0547">Nucleotide-binding</keyword>
<keyword id="KW-0539">Nucleus</keyword>
<keyword id="KW-0647">Proteasome</keyword>
<keyword id="KW-1185">Reference proteome</keyword>
<feature type="chain" id="PRO_0000084726" description="26S proteasome regulatory subunit 8">
    <location>
        <begin position="1"/>
        <end position="403"/>
    </location>
</feature>
<feature type="binding site" evidence="2">
    <location>
        <begin position="186"/>
        <end position="193"/>
    </location>
    <ligand>
        <name>ATP</name>
        <dbReference type="ChEBI" id="CHEBI:30616"/>
    </ligand>
</feature>
<feature type="sequence conflict" description="In Ref. 2; AAA33254." evidence="3" ref="2">
    <original>GIKSY</original>
    <variation>SARD</variation>
    <location>
        <begin position="15"/>
        <end position="19"/>
    </location>
</feature>
<evidence type="ECO:0000250" key="1"/>
<evidence type="ECO:0000255" key="2"/>
<evidence type="ECO:0000305" key="3"/>
<protein>
    <recommendedName>
        <fullName>26S proteasome regulatory subunit 8</fullName>
    </recommendedName>
    <alternativeName>
        <fullName>26S proteasome AAA-ATPase subunit RPT6</fullName>
    </alternativeName>
    <alternativeName>
        <fullName>Proteasome 26S subunit ATPase 5</fullName>
    </alternativeName>
    <alternativeName>
        <fullName>Tat-binding protein homolog 10</fullName>
    </alternativeName>
</protein>